<sequence length="391" mass="41234">MKLTLISSCVALAFMALATEAAPSGKKLSIPLTKNTNYKPSAKNAIQKALAKYHRFRTTSSSNSTSTEGTGSVPVTDYYNDIEYYGKVTVGTPGVTLKLDFDTGSSDLWFASTLCTNCGSSQTKYNPNQSSTYAKDGRTWSISYGDGSSASGILGTDTVTLGGLKITKQTIELAKREATSFQSGPSYGLLGLGFDTITTVRGVKTPVDNLISQGLISKPIFGVYLGKESNGGGGEYIFGGYDSSKYSGSLTTIPVDNSNGWYGITIKGTTIGSSKVSSSFSAILDTGTTLLILPNNVASAVARSYGASDNGDGTYTIDCDTSSFKPLVFSIGSSTFEVPADSLVFEQDGSTCYAGFGYGDYDFAIFGDVFLKNNYVVFNQEVPEVQIAPIA</sequence>
<feature type="signal peptide" evidence="2">
    <location>
        <begin position="1"/>
        <end position="21"/>
    </location>
</feature>
<feature type="propeptide" id="PRO_0000025885" description="Activation peptide" evidence="2">
    <location>
        <begin position="22"/>
        <end position="68"/>
    </location>
</feature>
<feature type="chain" id="PRO_0000025886" description="Rhizopuspepsin-2">
    <location>
        <begin position="69"/>
        <end position="391"/>
    </location>
</feature>
<feature type="domain" description="Peptidase A1" evidence="3">
    <location>
        <begin position="84"/>
        <end position="388"/>
    </location>
</feature>
<feature type="active site" evidence="4">
    <location>
        <position position="102"/>
    </location>
</feature>
<feature type="active site" evidence="4">
    <location>
        <position position="285"/>
    </location>
</feature>
<feature type="disulfide bond" evidence="1">
    <location>
        <begin position="115"/>
        <end position="118"/>
    </location>
</feature>
<feature type="disulfide bond" evidence="1">
    <location>
        <begin position="319"/>
        <end position="352"/>
    </location>
</feature>
<proteinExistence type="inferred from homology"/>
<reference key="1">
    <citation type="submission" date="1996-08" db="EMBL/GenBank/DDBJ databases">
        <authorList>
            <person name="Horiuchi H."/>
            <person name="Nakamura H."/>
            <person name="Okazaki T."/>
            <person name="Yano K."/>
            <person name="Takagi M."/>
        </authorList>
    </citation>
    <scope>NUCLEOTIDE SEQUENCE [GENOMIC DNA]</scope>
    <source>
        <strain>NBRC 4810 / AS 3.4817</strain>
    </source>
</reference>
<dbReference type="EC" id="3.4.23.21"/>
<dbReference type="EMBL" id="X56964">
    <property type="protein sequence ID" value="CAA40284.1"/>
    <property type="molecule type" value="Genomic_DNA"/>
</dbReference>
<dbReference type="SMR" id="P43231"/>
<dbReference type="MEROPS" id="A01.012"/>
<dbReference type="GO" id="GO:0004190">
    <property type="term" value="F:aspartic-type endopeptidase activity"/>
    <property type="evidence" value="ECO:0007669"/>
    <property type="project" value="UniProtKB-KW"/>
</dbReference>
<dbReference type="GO" id="GO:0006508">
    <property type="term" value="P:proteolysis"/>
    <property type="evidence" value="ECO:0007669"/>
    <property type="project" value="UniProtKB-KW"/>
</dbReference>
<dbReference type="CDD" id="cd06097">
    <property type="entry name" value="Aspergillopepsin_like"/>
    <property type="match status" value="1"/>
</dbReference>
<dbReference type="FunFam" id="2.40.70.10:FF:000115">
    <property type="entry name" value="Lysosomal aspartic protease"/>
    <property type="match status" value="1"/>
</dbReference>
<dbReference type="Gene3D" id="2.40.70.10">
    <property type="entry name" value="Acid Proteases"/>
    <property type="match status" value="2"/>
</dbReference>
<dbReference type="InterPro" id="IPR001461">
    <property type="entry name" value="Aspartic_peptidase_A1"/>
</dbReference>
<dbReference type="InterPro" id="IPR001969">
    <property type="entry name" value="Aspartic_peptidase_AS"/>
</dbReference>
<dbReference type="InterPro" id="IPR034163">
    <property type="entry name" value="Aspergillopepsin-like_cat_dom"/>
</dbReference>
<dbReference type="InterPro" id="IPR033121">
    <property type="entry name" value="PEPTIDASE_A1"/>
</dbReference>
<dbReference type="InterPro" id="IPR021109">
    <property type="entry name" value="Peptidase_aspartic_dom_sf"/>
</dbReference>
<dbReference type="PANTHER" id="PTHR47966:SF1">
    <property type="entry name" value="ASPARTYL PROTEINASE"/>
    <property type="match status" value="1"/>
</dbReference>
<dbReference type="PANTHER" id="PTHR47966">
    <property type="entry name" value="BETA-SITE APP-CLEAVING ENZYME, ISOFORM A-RELATED"/>
    <property type="match status" value="1"/>
</dbReference>
<dbReference type="Pfam" id="PF00026">
    <property type="entry name" value="Asp"/>
    <property type="match status" value="1"/>
</dbReference>
<dbReference type="PRINTS" id="PR00792">
    <property type="entry name" value="PEPSIN"/>
</dbReference>
<dbReference type="SUPFAM" id="SSF50630">
    <property type="entry name" value="Acid proteases"/>
    <property type="match status" value="1"/>
</dbReference>
<dbReference type="PROSITE" id="PS00141">
    <property type="entry name" value="ASP_PROTEASE"/>
    <property type="match status" value="2"/>
</dbReference>
<dbReference type="PROSITE" id="PS51767">
    <property type="entry name" value="PEPTIDASE_A1"/>
    <property type="match status" value="1"/>
</dbReference>
<keyword id="KW-0064">Aspartyl protease</keyword>
<keyword id="KW-1015">Disulfide bond</keyword>
<keyword id="KW-0378">Hydrolase</keyword>
<keyword id="KW-0645">Protease</keyword>
<keyword id="KW-0732">Signal</keyword>
<keyword id="KW-0865">Zymogen</keyword>
<protein>
    <recommendedName>
        <fullName>Rhizopuspepsin-2</fullName>
        <ecNumber>3.4.23.21</ecNumber>
    </recommendedName>
    <alternativeName>
        <fullName>Aspartate protease</fullName>
    </alternativeName>
</protein>
<organism>
    <name type="scientific">Rhizopus niveus</name>
    <dbReference type="NCBI Taxonomy" id="4844"/>
    <lineage>
        <taxon>Eukaryota</taxon>
        <taxon>Fungi</taxon>
        <taxon>Fungi incertae sedis</taxon>
        <taxon>Mucoromycota</taxon>
        <taxon>Mucoromycotina</taxon>
        <taxon>Mucoromycetes</taxon>
        <taxon>Mucorales</taxon>
        <taxon>Mucorineae</taxon>
        <taxon>Rhizopodaceae</taxon>
        <taxon>Rhizopus</taxon>
    </lineage>
</organism>
<name>CARP2_RHINI</name>
<accession>P43231</accession>
<evidence type="ECO:0000250" key="1"/>
<evidence type="ECO:0000255" key="2"/>
<evidence type="ECO:0000255" key="3">
    <source>
        <dbReference type="PROSITE-ProRule" id="PRU01103"/>
    </source>
</evidence>
<evidence type="ECO:0000255" key="4">
    <source>
        <dbReference type="PROSITE-ProRule" id="PRU10094"/>
    </source>
</evidence>
<evidence type="ECO:0000305" key="5"/>
<comment type="catalytic activity">
    <reaction>
        <text>Hydrolysis of proteins with broad specificity similar to that of pepsin A, preferring hydrophobic residues at P1 and P1'. Clots milk and activates trypsinogen. Does not cleave 4-Gln-|-His-5, but does cleave 10-His-|-Leu-11 and 12-Val-|-Glu-13 in B chain of insulin.</text>
        <dbReference type="EC" id="3.4.23.21"/>
    </reaction>
</comment>
<comment type="similarity">
    <text evidence="5">Belongs to the peptidase A1 family.</text>
</comment>